<proteinExistence type="inferred from homology"/>
<comment type="function">
    <text evidence="2">With S4 and S5 plays an important role in translational accuracy.</text>
</comment>
<comment type="function">
    <text evidence="2">Interacts with and stabilizes bases of the 16S rRNA that are involved in tRNA selection in the A site and with the mRNA backbone. Located at the interface of the 30S and 50S subunits, it traverses the body of the 30S subunit contacting proteins on the other side and probably holding the rRNA structure together. The combined cluster of proteins S8, S12 and S17 appears to hold together the shoulder and platform of the 30S subunit.</text>
</comment>
<comment type="subunit">
    <text evidence="2">Part of the 30S ribosomal subunit. Contacts proteins S8 and S17. May interact with IF1 in the 30S initiation complex.</text>
</comment>
<comment type="similarity">
    <text evidence="2">Belongs to the universal ribosomal protein uS12 family.</text>
</comment>
<organism>
    <name type="scientific">Streptococcus pneumoniae serotype 2 (strain D39 / NCTC 7466)</name>
    <dbReference type="NCBI Taxonomy" id="373153"/>
    <lineage>
        <taxon>Bacteria</taxon>
        <taxon>Bacillati</taxon>
        <taxon>Bacillota</taxon>
        <taxon>Bacilli</taxon>
        <taxon>Lactobacillales</taxon>
        <taxon>Streptococcaceae</taxon>
        <taxon>Streptococcus</taxon>
    </lineage>
</organism>
<accession>Q04MH9</accession>
<evidence type="ECO:0000250" key="1"/>
<evidence type="ECO:0000255" key="2">
    <source>
        <dbReference type="HAMAP-Rule" id="MF_00403"/>
    </source>
</evidence>
<evidence type="ECO:0000256" key="3">
    <source>
        <dbReference type="SAM" id="MobiDB-lite"/>
    </source>
</evidence>
<evidence type="ECO:0000305" key="4"/>
<name>RS12_STRP2</name>
<reference key="1">
    <citation type="journal article" date="2007" name="J. Bacteriol.">
        <title>Genome sequence of Avery's virulent serotype 2 strain D39 of Streptococcus pneumoniae and comparison with that of unencapsulated laboratory strain R6.</title>
        <authorList>
            <person name="Lanie J.A."/>
            <person name="Ng W.-L."/>
            <person name="Kazmierczak K.M."/>
            <person name="Andrzejewski T.M."/>
            <person name="Davidsen T.M."/>
            <person name="Wayne K.J."/>
            <person name="Tettelin H."/>
            <person name="Glass J.I."/>
            <person name="Winkler M.E."/>
        </authorList>
    </citation>
    <scope>NUCLEOTIDE SEQUENCE [LARGE SCALE GENOMIC DNA]</scope>
    <source>
        <strain>D39 / NCTC 7466</strain>
    </source>
</reference>
<protein>
    <recommendedName>
        <fullName evidence="2">Small ribosomal subunit protein uS12</fullName>
    </recommendedName>
    <alternativeName>
        <fullName evidence="4">30S ribosomal protein S12</fullName>
    </alternativeName>
</protein>
<gene>
    <name evidence="2" type="primary">rpsL</name>
    <name type="ordered locus">SPD_0251</name>
</gene>
<sequence>MPTINQLVRKPRKSKVEKSKSPALNVGYNSHKKVQTNVSSPQKRGVATRVGTMTPKKPNSALRKFARVRLSNLIEVTAYIPGIGHNLQEHSVVLLRGGRVKDLPGVRYHIVRGALDTAGVNDRKQGRSKYGTKRPKA</sequence>
<dbReference type="EMBL" id="CP000410">
    <property type="protein sequence ID" value="ABJ54605.1"/>
    <property type="molecule type" value="Genomic_DNA"/>
</dbReference>
<dbReference type="RefSeq" id="WP_001142332.1">
    <property type="nucleotide sequence ID" value="NZ_JAMLJR010000002.1"/>
</dbReference>
<dbReference type="SMR" id="Q04MH9"/>
<dbReference type="PaxDb" id="373153-SPD_0251"/>
<dbReference type="GeneID" id="93922571"/>
<dbReference type="KEGG" id="spd:SPD_0251"/>
<dbReference type="eggNOG" id="COG0048">
    <property type="taxonomic scope" value="Bacteria"/>
</dbReference>
<dbReference type="HOGENOM" id="CLU_104295_1_2_9"/>
<dbReference type="BioCyc" id="SPNE373153:G1G6V-276-MONOMER"/>
<dbReference type="Proteomes" id="UP000001452">
    <property type="component" value="Chromosome"/>
</dbReference>
<dbReference type="GO" id="GO:0015935">
    <property type="term" value="C:small ribosomal subunit"/>
    <property type="evidence" value="ECO:0007669"/>
    <property type="project" value="InterPro"/>
</dbReference>
<dbReference type="GO" id="GO:0019843">
    <property type="term" value="F:rRNA binding"/>
    <property type="evidence" value="ECO:0007669"/>
    <property type="project" value="UniProtKB-UniRule"/>
</dbReference>
<dbReference type="GO" id="GO:0003735">
    <property type="term" value="F:structural constituent of ribosome"/>
    <property type="evidence" value="ECO:0007669"/>
    <property type="project" value="InterPro"/>
</dbReference>
<dbReference type="GO" id="GO:0000049">
    <property type="term" value="F:tRNA binding"/>
    <property type="evidence" value="ECO:0007669"/>
    <property type="project" value="UniProtKB-UniRule"/>
</dbReference>
<dbReference type="GO" id="GO:0006412">
    <property type="term" value="P:translation"/>
    <property type="evidence" value="ECO:0007669"/>
    <property type="project" value="UniProtKB-UniRule"/>
</dbReference>
<dbReference type="CDD" id="cd03368">
    <property type="entry name" value="Ribosomal_S12"/>
    <property type="match status" value="1"/>
</dbReference>
<dbReference type="FunFam" id="2.40.50.140:FF:000001">
    <property type="entry name" value="30S ribosomal protein S12"/>
    <property type="match status" value="1"/>
</dbReference>
<dbReference type="Gene3D" id="2.40.50.140">
    <property type="entry name" value="Nucleic acid-binding proteins"/>
    <property type="match status" value="1"/>
</dbReference>
<dbReference type="HAMAP" id="MF_00403_B">
    <property type="entry name" value="Ribosomal_uS12_B"/>
    <property type="match status" value="1"/>
</dbReference>
<dbReference type="InterPro" id="IPR012340">
    <property type="entry name" value="NA-bd_OB-fold"/>
</dbReference>
<dbReference type="InterPro" id="IPR006032">
    <property type="entry name" value="Ribosomal_uS12"/>
</dbReference>
<dbReference type="InterPro" id="IPR005679">
    <property type="entry name" value="Ribosomal_uS12_bac"/>
</dbReference>
<dbReference type="NCBIfam" id="TIGR00981">
    <property type="entry name" value="rpsL_bact"/>
    <property type="match status" value="1"/>
</dbReference>
<dbReference type="PANTHER" id="PTHR11652">
    <property type="entry name" value="30S RIBOSOMAL PROTEIN S12 FAMILY MEMBER"/>
    <property type="match status" value="1"/>
</dbReference>
<dbReference type="Pfam" id="PF00164">
    <property type="entry name" value="Ribosom_S12_S23"/>
    <property type="match status" value="1"/>
</dbReference>
<dbReference type="PIRSF" id="PIRSF002133">
    <property type="entry name" value="Ribosomal_S12/S23"/>
    <property type="match status" value="1"/>
</dbReference>
<dbReference type="PRINTS" id="PR01034">
    <property type="entry name" value="RIBOSOMALS12"/>
</dbReference>
<dbReference type="SUPFAM" id="SSF50249">
    <property type="entry name" value="Nucleic acid-binding proteins"/>
    <property type="match status" value="1"/>
</dbReference>
<dbReference type="PROSITE" id="PS00055">
    <property type="entry name" value="RIBOSOMAL_S12"/>
    <property type="match status" value="1"/>
</dbReference>
<keyword id="KW-0488">Methylation</keyword>
<keyword id="KW-1185">Reference proteome</keyword>
<keyword id="KW-0687">Ribonucleoprotein</keyword>
<keyword id="KW-0689">Ribosomal protein</keyword>
<keyword id="KW-0694">RNA-binding</keyword>
<keyword id="KW-0699">rRNA-binding</keyword>
<keyword id="KW-0820">tRNA-binding</keyword>
<feature type="chain" id="PRO_0000296033" description="Small ribosomal subunit protein uS12">
    <location>
        <begin position="1"/>
        <end position="137"/>
    </location>
</feature>
<feature type="region of interest" description="Disordered" evidence="3">
    <location>
        <begin position="1"/>
        <end position="57"/>
    </location>
</feature>
<feature type="modified residue" description="3-methylthioaspartic acid" evidence="1">
    <location>
        <position position="102"/>
    </location>
</feature>